<proteinExistence type="evidence at transcript level"/>
<name>PLH16_FORAG</name>
<evidence type="ECO:0000250" key="1">
    <source>
        <dbReference type="UniProtKB" id="P05804"/>
    </source>
</evidence>
<evidence type="ECO:0000255" key="2">
    <source>
        <dbReference type="PROSITE-ProRule" id="PRU00523"/>
    </source>
</evidence>
<evidence type="ECO:0000269" key="3">
    <source>
    </source>
</evidence>
<evidence type="ECO:0000303" key="4">
    <source>
    </source>
</evidence>
<evidence type="ECO:0000305" key="5"/>
<evidence type="ECO:0000305" key="6">
    <source>
    </source>
</evidence>
<evidence type="ECO:0000305" key="7">
    <source ref="2"/>
</evidence>
<evidence type="ECO:0000312" key="8">
    <source>
        <dbReference type="EMBL" id="CDF79917.1"/>
    </source>
</evidence>
<sequence length="1034" mass="117464">MHQKIVECIPLWSRNLNSNVKGMRGEGIACLLIVLCSIIYRTEAQRIETNFNNNWHFILKDSPDFSKENLDDSSWELLNVPHDWSFEKGVRKGGDQGQGGGYHDGGIGWYRKTFSFSKASLSKTTYINFDGVYMNSEVWINGNRLGKRPYGYISFRYDISKYLKVGKNTIAVRVDNGLEPSARWYHSCGIYAPVKLVEVNPTHFKPNTIFIKTPSIEKQQGVVSIDAEIKGAFKGLKYNVELLTANGKVIATHSEKLASAQPSVQLEVKPPKLWSPESPNLYKAKTQILDGKKVIDEKTTTFGFRTVAWKTETGFWLNGENVKLKGVCEHWEGGPVGGAWTKPMLRWKLQSLKDMGINAIRPSHNSTPPMFYDICDEIGLLVMDEIFDGWHKKAPEDYGKQAFDEWWQADVKEWITRDRNHPSIFVWSLGNETHSDVAPEMVAFGKNLDPTRLFTSGAGNPEDMDIQGVNGGSETKSFIENNKLTKPFISTEAPHTWQTRGYYRTQTWWRDNELSGTYELPNLTEKEVFFYEGINPKNWKNRKQRFNSSYDNATVRVSARKYWEVMRDTPWHSGHFRWTGFDYYGEAGLVHGGLPFNLFMGGALDVAGFKKDLYYFYQSQWTEKPMIHMLPHWTHPRMKKGTVIPVWVYANADEVELFLNGISLGKDKPGTVWNEMQCEWLVPYEEGTLEAVGYINGKVVNRTSFSTAQQPSKLKTSILKLDAEGSFTDSFIVTSESLDTAGHLYPYGENKVYYHIQGDVKKISMENGNPIDPTSRTKSDFRALFFGKTRTFLRALPEPKEAAVVTAAILGDKALYTSNLITIDAQHIQLLGKSKTSDLEIRYTTNGENPETHGKLYKDAFMVEDDTTVKAIVKQNGKTVLSMEETFGKNEGLFWGDEHSADMWIGRGVDISAEEGVLTGAAKPSREAHRFKGSGFVDFKGGEGSITWYQENDGEPGDYSIRFRYMHNNHGKLHPMKLYVNDEYVRTIEFEPTGGWEKEWKFVPTIIVLQSGANNIKLETTGESGPFIDELFID</sequence>
<accession>T2KM09</accession>
<reference key="1">
    <citation type="journal article" date="2013" name="Appl. Environ. Microbiol.">
        <title>The genome of the alga-associated marine flavobacterium Formosa agariphila KMM 3901T reveals a broad potential for degradation of algal polysaccharides.</title>
        <authorList>
            <person name="Mann A.J."/>
            <person name="Hahnke R.L."/>
            <person name="Huang S."/>
            <person name="Werner J."/>
            <person name="Xing P."/>
            <person name="Barbeyron T."/>
            <person name="Huettel B."/>
            <person name="Stueber K."/>
            <person name="Reinhardt R."/>
            <person name="Harder J."/>
            <person name="Gloeckner F.O."/>
            <person name="Amann R.I."/>
            <person name="Teeling H."/>
        </authorList>
    </citation>
    <scope>NUCLEOTIDE SEQUENCE [LARGE SCALE GENOMIC DNA]</scope>
    <source>
        <strain>DSM 15362 / KCTC 12365 / LMG 23005 / KMM 3901 / M-2Alg 35-1</strain>
    </source>
</reference>
<reference key="2">
    <citation type="journal article" date="2017" name="Algal Res.">
        <title>The enzymatic ulvan depolymerisation system from the alga-associated marine flavobacterium Formosa agariphila.</title>
        <authorList>
            <person name="Salinas A."/>
            <person name="French C.E."/>
        </authorList>
    </citation>
    <scope>REVISION OF GENE MODEL</scope>
</reference>
<reference key="3">
    <citation type="journal article" date="2019" name="Nat. Chem. Biol.">
        <title>A marine bacterial enzymatic cascade degrades the algal polysaccharide ulvan.</title>
        <authorList>
            <person name="Reisky L."/>
            <person name="Prechoux A."/>
            <person name="Zuehlke M.K."/>
            <person name="Baeumgen M."/>
            <person name="Robb C.S."/>
            <person name="Gerlach N."/>
            <person name="Roret T."/>
            <person name="Stanetty C."/>
            <person name="Larocque R."/>
            <person name="Michel G."/>
            <person name="Song T."/>
            <person name="Markert S."/>
            <person name="Unfried F."/>
            <person name="Mihovilovic M.D."/>
            <person name="Trautwein-Schult A."/>
            <person name="Becher D."/>
            <person name="Schweder T."/>
            <person name="Bornscheuer U.T."/>
            <person name="Hehemann J.H."/>
        </authorList>
    </citation>
    <scope>FUNCTION</scope>
    <scope>SUBCELLULAR LOCATION</scope>
    <scope>INDUCTION</scope>
</reference>
<organism>
    <name type="scientific">Formosa agariphila (strain DSM 15362 / KCTC 12365 / LMG 23005 / KMM 3901 / M-2Alg 35-1)</name>
    <dbReference type="NCBI Taxonomy" id="1347342"/>
    <lineage>
        <taxon>Bacteria</taxon>
        <taxon>Pseudomonadati</taxon>
        <taxon>Bacteroidota</taxon>
        <taxon>Flavobacteriia</taxon>
        <taxon>Flavobacteriales</taxon>
        <taxon>Flavobacteriaceae</taxon>
        <taxon>Formosa</taxon>
    </lineage>
</organism>
<keyword id="KW-0963">Cytoplasm</keyword>
<keyword id="KW-0326">Glycosidase</keyword>
<keyword id="KW-0378">Hydrolase</keyword>
<keyword id="KW-1185">Reference proteome</keyword>
<gene>
    <name evidence="8" type="ORF">BN863_22050</name>
</gene>
<protein>
    <recommendedName>
        <fullName evidence="5">Putative beta-glucuronidase</fullName>
        <ecNumber evidence="1">3.2.1.31</ecNumber>
    </recommendedName>
    <alternativeName>
        <fullName evidence="5">Glycosyl hydrolase 2 family protein P16</fullName>
        <shortName evidence="4">P16_GH2</shortName>
    </alternativeName>
    <alternativeName>
        <fullName evidence="4">Polysaccharide utilization locus H protein P16</fullName>
        <shortName>PUL H protein P16</shortName>
    </alternativeName>
</protein>
<comment type="function">
    <text evidence="6 7">Glycoside hydrolase that may be involved in ulvan degradation (Probable). Ulvan is the main polysaccharide component of the Ulvales (green seaweed) cell wall. It is composed of disaccharide building blocks comprising 3-sulfated rhamnose (Rha3S) linked to D-glucuronic acid (GlcA), L-iduronic acid (IduA), or D-xylose (Xyl) (Probable).</text>
</comment>
<comment type="catalytic activity">
    <reaction evidence="1">
        <text>a beta-D-glucuronoside + H2O = D-glucuronate + an alcohol</text>
        <dbReference type="Rhea" id="RHEA:17633"/>
        <dbReference type="ChEBI" id="CHEBI:15377"/>
        <dbReference type="ChEBI" id="CHEBI:30879"/>
        <dbReference type="ChEBI" id="CHEBI:58720"/>
        <dbReference type="ChEBI" id="CHEBI:83411"/>
        <dbReference type="EC" id="3.2.1.31"/>
    </reaction>
</comment>
<comment type="subcellular location">
    <subcellularLocation>
        <location evidence="6">Cytoplasm</location>
    </subcellularLocation>
</comment>
<comment type="induction">
    <text evidence="3">By ulvan and rhamnose.</text>
</comment>
<comment type="similarity">
    <text evidence="5">Belongs to the glycosyl hydrolase 2 family.</text>
</comment>
<comment type="sequence caution" evidence="7">
    <conflict type="erroneous initiation">
        <sequence resource="EMBL-CDS" id="CDF79917"/>
    </conflict>
    <text>Truncated N-terminus.</text>
</comment>
<dbReference type="EC" id="3.2.1.31" evidence="1"/>
<dbReference type="EMBL" id="HG315671">
    <property type="protein sequence ID" value="CDF79917.1"/>
    <property type="status" value="ALT_INIT"/>
    <property type="molecule type" value="Genomic_DNA"/>
</dbReference>
<dbReference type="SMR" id="T2KM09"/>
<dbReference type="STRING" id="1347342.BN863_22050"/>
<dbReference type="PATRIC" id="fig|1347342.6.peg.2212"/>
<dbReference type="eggNOG" id="COG3250">
    <property type="taxonomic scope" value="Bacteria"/>
</dbReference>
<dbReference type="HOGENOM" id="CLU_006501_0_1_10"/>
<dbReference type="Proteomes" id="UP000016160">
    <property type="component" value="Chromosome"/>
</dbReference>
<dbReference type="GO" id="GO:0005737">
    <property type="term" value="C:cytoplasm"/>
    <property type="evidence" value="ECO:0007669"/>
    <property type="project" value="UniProtKB-SubCell"/>
</dbReference>
<dbReference type="GO" id="GO:0004566">
    <property type="term" value="F:beta-glucuronidase activity"/>
    <property type="evidence" value="ECO:0007669"/>
    <property type="project" value="UniProtKB-EC"/>
</dbReference>
<dbReference type="GO" id="GO:0030246">
    <property type="term" value="F:carbohydrate binding"/>
    <property type="evidence" value="ECO:0007669"/>
    <property type="project" value="InterPro"/>
</dbReference>
<dbReference type="GO" id="GO:0005975">
    <property type="term" value="P:carbohydrate metabolic process"/>
    <property type="evidence" value="ECO:0007669"/>
    <property type="project" value="InterPro"/>
</dbReference>
<dbReference type="Gene3D" id="2.60.120.260">
    <property type="entry name" value="Galactose-binding domain-like"/>
    <property type="match status" value="2"/>
</dbReference>
<dbReference type="Gene3D" id="3.20.20.80">
    <property type="entry name" value="Glycosidases"/>
    <property type="match status" value="1"/>
</dbReference>
<dbReference type="Gene3D" id="2.60.40.10">
    <property type="entry name" value="Immunoglobulins"/>
    <property type="match status" value="3"/>
</dbReference>
<dbReference type="InterPro" id="IPR036156">
    <property type="entry name" value="Beta-gal/glucu_dom_sf"/>
</dbReference>
<dbReference type="InterPro" id="IPR005084">
    <property type="entry name" value="CBM6"/>
</dbReference>
<dbReference type="InterPro" id="IPR032311">
    <property type="entry name" value="DUF4982"/>
</dbReference>
<dbReference type="InterPro" id="IPR026876">
    <property type="entry name" value="Fn3_assoc_repeat"/>
</dbReference>
<dbReference type="InterPro" id="IPR008979">
    <property type="entry name" value="Galactose-bd-like_sf"/>
</dbReference>
<dbReference type="InterPro" id="IPR051913">
    <property type="entry name" value="GH2_Domain-Containing"/>
</dbReference>
<dbReference type="InterPro" id="IPR006101">
    <property type="entry name" value="Glyco_hydro_2"/>
</dbReference>
<dbReference type="InterPro" id="IPR023232">
    <property type="entry name" value="Glyco_hydro_2_AS"/>
</dbReference>
<dbReference type="InterPro" id="IPR006103">
    <property type="entry name" value="Glyco_hydro_2_cat"/>
</dbReference>
<dbReference type="InterPro" id="IPR006102">
    <property type="entry name" value="Glyco_hydro_2_Ig-like"/>
</dbReference>
<dbReference type="InterPro" id="IPR006104">
    <property type="entry name" value="Glyco_hydro_2_N"/>
</dbReference>
<dbReference type="InterPro" id="IPR017853">
    <property type="entry name" value="Glycoside_hydrolase_SF"/>
</dbReference>
<dbReference type="InterPro" id="IPR013783">
    <property type="entry name" value="Ig-like_fold"/>
</dbReference>
<dbReference type="PANTHER" id="PTHR42732">
    <property type="entry name" value="BETA-GALACTOSIDASE"/>
    <property type="match status" value="1"/>
</dbReference>
<dbReference type="PANTHER" id="PTHR42732:SF1">
    <property type="entry name" value="BETA-MANNOSIDASE"/>
    <property type="match status" value="1"/>
</dbReference>
<dbReference type="Pfam" id="PF16355">
    <property type="entry name" value="DUF4982"/>
    <property type="match status" value="1"/>
</dbReference>
<dbReference type="Pfam" id="PF13287">
    <property type="entry name" value="Fn3_assoc"/>
    <property type="match status" value="1"/>
</dbReference>
<dbReference type="Pfam" id="PF00703">
    <property type="entry name" value="Glyco_hydro_2"/>
    <property type="match status" value="1"/>
</dbReference>
<dbReference type="Pfam" id="PF02836">
    <property type="entry name" value="Glyco_hydro_2_C"/>
    <property type="match status" value="1"/>
</dbReference>
<dbReference type="Pfam" id="PF02837">
    <property type="entry name" value="Glyco_hydro_2_N"/>
    <property type="match status" value="1"/>
</dbReference>
<dbReference type="PRINTS" id="PR00132">
    <property type="entry name" value="GLHYDRLASE2"/>
</dbReference>
<dbReference type="SUPFAM" id="SSF51445">
    <property type="entry name" value="(Trans)glycosidases"/>
    <property type="match status" value="1"/>
</dbReference>
<dbReference type="SUPFAM" id="SSF49303">
    <property type="entry name" value="beta-Galactosidase/glucuronidase domain"/>
    <property type="match status" value="1"/>
</dbReference>
<dbReference type="SUPFAM" id="SSF49785">
    <property type="entry name" value="Galactose-binding domain-like"/>
    <property type="match status" value="2"/>
</dbReference>
<dbReference type="PROSITE" id="PS51175">
    <property type="entry name" value="CBM6"/>
    <property type="match status" value="1"/>
</dbReference>
<dbReference type="PROSITE" id="PS00608">
    <property type="entry name" value="GLYCOSYL_HYDROL_F2_2"/>
    <property type="match status" value="1"/>
</dbReference>
<feature type="chain" id="PRO_0000448300" description="Putative beta-glucuronidase">
    <location>
        <begin position="1"/>
        <end position="1034"/>
    </location>
</feature>
<feature type="domain" description="CBM6" evidence="2">
    <location>
        <begin position="909"/>
        <end position="1034"/>
    </location>
</feature>
<feature type="active site" description="Proton donor" evidence="1">
    <location>
        <position position="432"/>
    </location>
</feature>